<dbReference type="EMBL" id="CP000712">
    <property type="protein sequence ID" value="ABQ80307.1"/>
    <property type="molecule type" value="Genomic_DNA"/>
</dbReference>
<dbReference type="SMR" id="A5W847"/>
<dbReference type="KEGG" id="ppf:Pput_4183"/>
<dbReference type="eggNOG" id="COG0233">
    <property type="taxonomic scope" value="Bacteria"/>
</dbReference>
<dbReference type="HOGENOM" id="CLU_073981_2_0_6"/>
<dbReference type="GO" id="GO:0005829">
    <property type="term" value="C:cytosol"/>
    <property type="evidence" value="ECO:0007669"/>
    <property type="project" value="GOC"/>
</dbReference>
<dbReference type="GO" id="GO:0043023">
    <property type="term" value="F:ribosomal large subunit binding"/>
    <property type="evidence" value="ECO:0007669"/>
    <property type="project" value="TreeGrafter"/>
</dbReference>
<dbReference type="GO" id="GO:0002184">
    <property type="term" value="P:cytoplasmic translational termination"/>
    <property type="evidence" value="ECO:0007669"/>
    <property type="project" value="TreeGrafter"/>
</dbReference>
<dbReference type="CDD" id="cd00520">
    <property type="entry name" value="RRF"/>
    <property type="match status" value="1"/>
</dbReference>
<dbReference type="FunFam" id="1.10.132.20:FF:000001">
    <property type="entry name" value="Ribosome-recycling factor"/>
    <property type="match status" value="1"/>
</dbReference>
<dbReference type="FunFam" id="3.30.1360.40:FF:000001">
    <property type="entry name" value="Ribosome-recycling factor"/>
    <property type="match status" value="1"/>
</dbReference>
<dbReference type="Gene3D" id="3.30.1360.40">
    <property type="match status" value="1"/>
</dbReference>
<dbReference type="Gene3D" id="1.10.132.20">
    <property type="entry name" value="Ribosome-recycling factor"/>
    <property type="match status" value="1"/>
</dbReference>
<dbReference type="HAMAP" id="MF_00040">
    <property type="entry name" value="RRF"/>
    <property type="match status" value="1"/>
</dbReference>
<dbReference type="InterPro" id="IPR002661">
    <property type="entry name" value="Ribosome_recyc_fac"/>
</dbReference>
<dbReference type="InterPro" id="IPR023584">
    <property type="entry name" value="Ribosome_recyc_fac_dom"/>
</dbReference>
<dbReference type="InterPro" id="IPR036191">
    <property type="entry name" value="RRF_sf"/>
</dbReference>
<dbReference type="NCBIfam" id="TIGR00496">
    <property type="entry name" value="frr"/>
    <property type="match status" value="1"/>
</dbReference>
<dbReference type="PANTHER" id="PTHR20982:SF3">
    <property type="entry name" value="MITOCHONDRIAL RIBOSOME RECYCLING FACTOR PSEUDO 1"/>
    <property type="match status" value="1"/>
</dbReference>
<dbReference type="PANTHER" id="PTHR20982">
    <property type="entry name" value="RIBOSOME RECYCLING FACTOR"/>
    <property type="match status" value="1"/>
</dbReference>
<dbReference type="Pfam" id="PF01765">
    <property type="entry name" value="RRF"/>
    <property type="match status" value="1"/>
</dbReference>
<dbReference type="SUPFAM" id="SSF55194">
    <property type="entry name" value="Ribosome recycling factor, RRF"/>
    <property type="match status" value="1"/>
</dbReference>
<evidence type="ECO:0000255" key="1">
    <source>
        <dbReference type="HAMAP-Rule" id="MF_00040"/>
    </source>
</evidence>
<protein>
    <recommendedName>
        <fullName evidence="1">Ribosome-recycling factor</fullName>
        <shortName evidence="1">RRF</shortName>
    </recommendedName>
    <alternativeName>
        <fullName evidence="1">Ribosome-releasing factor</fullName>
    </alternativeName>
</protein>
<comment type="function">
    <text evidence="1">Responsible for the release of ribosomes from messenger RNA at the termination of protein biosynthesis. May increase the efficiency of translation by recycling ribosomes from one round of translation to another.</text>
</comment>
<comment type="subcellular location">
    <subcellularLocation>
        <location evidence="1">Cytoplasm</location>
    </subcellularLocation>
</comment>
<comment type="similarity">
    <text evidence="1">Belongs to the RRF family.</text>
</comment>
<keyword id="KW-0963">Cytoplasm</keyword>
<keyword id="KW-0648">Protein biosynthesis</keyword>
<sequence length="185" mass="20152">MINDIKKDAQERMGKSIEALSRNLAAIRTGRAHPSILDSVKVTAWGSEMPLNQVAAITVEDARTLKIVAHDKNLSAAIEKAILTSDLGLNPSSAGTTIRVPMPALTEETRKGYTKQASGVAEDAKVAVRNVRRDALADLKKLTKDKEISEDEERRAADEIQKLTDKFVAEVDAAFKAKEKDLMAV</sequence>
<name>RRF_PSEP1</name>
<gene>
    <name evidence="1" type="primary">frr</name>
    <name type="ordered locus">Pput_4183</name>
</gene>
<feature type="chain" id="PRO_1000003234" description="Ribosome-recycling factor">
    <location>
        <begin position="1"/>
        <end position="185"/>
    </location>
</feature>
<reference key="1">
    <citation type="submission" date="2007-05" db="EMBL/GenBank/DDBJ databases">
        <title>Complete sequence of Pseudomonas putida F1.</title>
        <authorList>
            <consortium name="US DOE Joint Genome Institute"/>
            <person name="Copeland A."/>
            <person name="Lucas S."/>
            <person name="Lapidus A."/>
            <person name="Barry K."/>
            <person name="Detter J.C."/>
            <person name="Glavina del Rio T."/>
            <person name="Hammon N."/>
            <person name="Israni S."/>
            <person name="Dalin E."/>
            <person name="Tice H."/>
            <person name="Pitluck S."/>
            <person name="Chain P."/>
            <person name="Malfatti S."/>
            <person name="Shin M."/>
            <person name="Vergez L."/>
            <person name="Schmutz J."/>
            <person name="Larimer F."/>
            <person name="Land M."/>
            <person name="Hauser L."/>
            <person name="Kyrpides N."/>
            <person name="Lykidis A."/>
            <person name="Parales R."/>
            <person name="Richardson P."/>
        </authorList>
    </citation>
    <scope>NUCLEOTIDE SEQUENCE [LARGE SCALE GENOMIC DNA]</scope>
    <source>
        <strain>ATCC 700007 / DSM 6899 / JCM 31910 / BCRC 17059 / LMG 24140 / F1</strain>
    </source>
</reference>
<organism>
    <name type="scientific">Pseudomonas putida (strain ATCC 700007 / DSM 6899 / JCM 31910 / BCRC 17059 / LMG 24140 / F1)</name>
    <dbReference type="NCBI Taxonomy" id="351746"/>
    <lineage>
        <taxon>Bacteria</taxon>
        <taxon>Pseudomonadati</taxon>
        <taxon>Pseudomonadota</taxon>
        <taxon>Gammaproteobacteria</taxon>
        <taxon>Pseudomonadales</taxon>
        <taxon>Pseudomonadaceae</taxon>
        <taxon>Pseudomonas</taxon>
    </lineage>
</organism>
<accession>A5W847</accession>
<proteinExistence type="inferred from homology"/>